<name>ROK1_CRYNB</name>
<dbReference type="EC" id="3.6.4.13"/>
<dbReference type="EMBL" id="AAEY01000036">
    <property type="protein sequence ID" value="EAL19818.1"/>
    <property type="molecule type" value="Genomic_DNA"/>
</dbReference>
<dbReference type="RefSeq" id="XP_774465.1">
    <property type="nucleotide sequence ID" value="XM_769372.1"/>
</dbReference>
<dbReference type="SMR" id="P0CR05"/>
<dbReference type="GeneID" id="4937145"/>
<dbReference type="KEGG" id="cnb:CNBG1110"/>
<dbReference type="VEuPathDB" id="FungiDB:CNBG1110"/>
<dbReference type="HOGENOM" id="CLU_003041_1_4_1"/>
<dbReference type="OrthoDB" id="6351at5206"/>
<dbReference type="GO" id="GO:0005829">
    <property type="term" value="C:cytosol"/>
    <property type="evidence" value="ECO:0007669"/>
    <property type="project" value="TreeGrafter"/>
</dbReference>
<dbReference type="GO" id="GO:0005730">
    <property type="term" value="C:nucleolus"/>
    <property type="evidence" value="ECO:0007669"/>
    <property type="project" value="UniProtKB-SubCell"/>
</dbReference>
<dbReference type="GO" id="GO:0005524">
    <property type="term" value="F:ATP binding"/>
    <property type="evidence" value="ECO:0007669"/>
    <property type="project" value="UniProtKB-KW"/>
</dbReference>
<dbReference type="GO" id="GO:0016887">
    <property type="term" value="F:ATP hydrolysis activity"/>
    <property type="evidence" value="ECO:0007669"/>
    <property type="project" value="RHEA"/>
</dbReference>
<dbReference type="GO" id="GO:0003723">
    <property type="term" value="F:RNA binding"/>
    <property type="evidence" value="ECO:0007669"/>
    <property type="project" value="UniProtKB-KW"/>
</dbReference>
<dbReference type="GO" id="GO:0003724">
    <property type="term" value="F:RNA helicase activity"/>
    <property type="evidence" value="ECO:0007669"/>
    <property type="project" value="UniProtKB-EC"/>
</dbReference>
<dbReference type="GO" id="GO:0006364">
    <property type="term" value="P:rRNA processing"/>
    <property type="evidence" value="ECO:0007669"/>
    <property type="project" value="UniProtKB-KW"/>
</dbReference>
<dbReference type="CDD" id="cd00268">
    <property type="entry name" value="DEADc"/>
    <property type="match status" value="1"/>
</dbReference>
<dbReference type="CDD" id="cd18787">
    <property type="entry name" value="SF2_C_DEAD"/>
    <property type="match status" value="1"/>
</dbReference>
<dbReference type="Gene3D" id="3.40.50.300">
    <property type="entry name" value="P-loop containing nucleotide triphosphate hydrolases"/>
    <property type="match status" value="2"/>
</dbReference>
<dbReference type="InterPro" id="IPR011545">
    <property type="entry name" value="DEAD/DEAH_box_helicase_dom"/>
</dbReference>
<dbReference type="InterPro" id="IPR050079">
    <property type="entry name" value="DEAD_box_RNA_helicase"/>
</dbReference>
<dbReference type="InterPro" id="IPR014001">
    <property type="entry name" value="Helicase_ATP-bd"/>
</dbReference>
<dbReference type="InterPro" id="IPR001650">
    <property type="entry name" value="Helicase_C-like"/>
</dbReference>
<dbReference type="InterPro" id="IPR027417">
    <property type="entry name" value="P-loop_NTPase"/>
</dbReference>
<dbReference type="PANTHER" id="PTHR47959">
    <property type="entry name" value="ATP-DEPENDENT RNA HELICASE RHLE-RELATED"/>
    <property type="match status" value="1"/>
</dbReference>
<dbReference type="PANTHER" id="PTHR47959:SF15">
    <property type="entry name" value="RNA HELICASE"/>
    <property type="match status" value="1"/>
</dbReference>
<dbReference type="Pfam" id="PF00270">
    <property type="entry name" value="DEAD"/>
    <property type="match status" value="2"/>
</dbReference>
<dbReference type="Pfam" id="PF00271">
    <property type="entry name" value="Helicase_C"/>
    <property type="match status" value="1"/>
</dbReference>
<dbReference type="SMART" id="SM00487">
    <property type="entry name" value="DEXDc"/>
    <property type="match status" value="1"/>
</dbReference>
<dbReference type="SMART" id="SM00490">
    <property type="entry name" value="HELICc"/>
    <property type="match status" value="1"/>
</dbReference>
<dbReference type="SUPFAM" id="SSF52540">
    <property type="entry name" value="P-loop containing nucleoside triphosphate hydrolases"/>
    <property type="match status" value="1"/>
</dbReference>
<dbReference type="PROSITE" id="PS51192">
    <property type="entry name" value="HELICASE_ATP_BIND_1"/>
    <property type="match status" value="1"/>
</dbReference>
<dbReference type="PROSITE" id="PS51194">
    <property type="entry name" value="HELICASE_CTER"/>
    <property type="match status" value="1"/>
</dbReference>
<gene>
    <name type="primary">ROK1</name>
    <name type="ordered locus">CNBG1110</name>
</gene>
<reference key="1">
    <citation type="journal article" date="2005" name="Science">
        <title>The genome of the basidiomycetous yeast and human pathogen Cryptococcus neoformans.</title>
        <authorList>
            <person name="Loftus B.J."/>
            <person name="Fung E."/>
            <person name="Roncaglia P."/>
            <person name="Rowley D."/>
            <person name="Amedeo P."/>
            <person name="Bruno D."/>
            <person name="Vamathevan J."/>
            <person name="Miranda M."/>
            <person name="Anderson I.J."/>
            <person name="Fraser J.A."/>
            <person name="Allen J.E."/>
            <person name="Bosdet I.E."/>
            <person name="Brent M.R."/>
            <person name="Chiu R."/>
            <person name="Doering T.L."/>
            <person name="Donlin M.J."/>
            <person name="D'Souza C.A."/>
            <person name="Fox D.S."/>
            <person name="Grinberg V."/>
            <person name="Fu J."/>
            <person name="Fukushima M."/>
            <person name="Haas B.J."/>
            <person name="Huang J.C."/>
            <person name="Janbon G."/>
            <person name="Jones S.J.M."/>
            <person name="Koo H.L."/>
            <person name="Krzywinski M.I."/>
            <person name="Kwon-Chung K.J."/>
            <person name="Lengeler K.B."/>
            <person name="Maiti R."/>
            <person name="Marra M.A."/>
            <person name="Marra R.E."/>
            <person name="Mathewson C.A."/>
            <person name="Mitchell T.G."/>
            <person name="Pertea M."/>
            <person name="Riggs F.R."/>
            <person name="Salzberg S.L."/>
            <person name="Schein J.E."/>
            <person name="Shvartsbeyn A."/>
            <person name="Shin H."/>
            <person name="Shumway M."/>
            <person name="Specht C.A."/>
            <person name="Suh B.B."/>
            <person name="Tenney A."/>
            <person name="Utterback T.R."/>
            <person name="Wickes B.L."/>
            <person name="Wortman J.R."/>
            <person name="Wye N.H."/>
            <person name="Kronstad J.W."/>
            <person name="Lodge J.K."/>
            <person name="Heitman J."/>
            <person name="Davis R.W."/>
            <person name="Fraser C.M."/>
            <person name="Hyman R.W."/>
        </authorList>
    </citation>
    <scope>NUCLEOTIDE SEQUENCE [LARGE SCALE GENOMIC DNA]</scope>
    <source>
        <strain>B-3501A</strain>
    </source>
</reference>
<comment type="function">
    <text>ATP-dependent RNA helicase involved in 40S ribosomal subunit biogenesis. Required for the processing and cleavage of 35S pre-rRNA at sites A0, A1, and A2, leading to mature 18S rRNA.</text>
</comment>
<comment type="catalytic activity">
    <reaction>
        <text>ATP + H2O = ADP + phosphate + H(+)</text>
        <dbReference type="Rhea" id="RHEA:13065"/>
        <dbReference type="ChEBI" id="CHEBI:15377"/>
        <dbReference type="ChEBI" id="CHEBI:15378"/>
        <dbReference type="ChEBI" id="CHEBI:30616"/>
        <dbReference type="ChEBI" id="CHEBI:43474"/>
        <dbReference type="ChEBI" id="CHEBI:456216"/>
        <dbReference type="EC" id="3.6.4.13"/>
    </reaction>
</comment>
<comment type="subunit">
    <text evidence="1">Interacts with the U3 snoRNA and is associated with the 90S and 40S pre-ribosomes.</text>
</comment>
<comment type="subcellular location">
    <subcellularLocation>
        <location evidence="1">Nucleus</location>
        <location evidence="1">Nucleolus</location>
    </subcellularLocation>
</comment>
<comment type="domain">
    <text>The Q motif is unique to and characteristic of the DEAD box family of RNA helicases and controls ATP binding and hydrolysis.</text>
</comment>
<comment type="similarity">
    <text evidence="5">Belongs to the DEAD box helicase family. DDX52/ROK1 subfamily.</text>
</comment>
<accession>P0CR05</accession>
<accession>Q55PV3</accession>
<accession>Q5KDK3</accession>
<organism>
    <name type="scientific">Cryptococcus neoformans var. neoformans serotype D (strain B-3501A)</name>
    <name type="common">Filobasidiella neoformans</name>
    <dbReference type="NCBI Taxonomy" id="283643"/>
    <lineage>
        <taxon>Eukaryota</taxon>
        <taxon>Fungi</taxon>
        <taxon>Dikarya</taxon>
        <taxon>Basidiomycota</taxon>
        <taxon>Agaricomycotina</taxon>
        <taxon>Tremellomycetes</taxon>
        <taxon>Tremellales</taxon>
        <taxon>Cryptococcaceae</taxon>
        <taxon>Cryptococcus</taxon>
        <taxon>Cryptococcus neoformans species complex</taxon>
    </lineage>
</organism>
<evidence type="ECO:0000250" key="1"/>
<evidence type="ECO:0000255" key="2">
    <source>
        <dbReference type="PROSITE-ProRule" id="PRU00541"/>
    </source>
</evidence>
<evidence type="ECO:0000255" key="3">
    <source>
        <dbReference type="PROSITE-ProRule" id="PRU00542"/>
    </source>
</evidence>
<evidence type="ECO:0000256" key="4">
    <source>
        <dbReference type="SAM" id="MobiDB-lite"/>
    </source>
</evidence>
<evidence type="ECO:0000305" key="5"/>
<proteinExistence type="inferred from homology"/>
<keyword id="KW-0067">ATP-binding</keyword>
<keyword id="KW-0347">Helicase</keyword>
<keyword id="KW-0378">Hydrolase</keyword>
<keyword id="KW-0547">Nucleotide-binding</keyword>
<keyword id="KW-0539">Nucleus</keyword>
<keyword id="KW-0690">Ribosome biogenesis</keyword>
<keyword id="KW-0694">RNA-binding</keyword>
<keyword id="KW-0698">rRNA processing</keyword>
<feature type="chain" id="PRO_0000410263" description="ATP-dependent RNA helicase ROK1">
    <location>
        <begin position="1"/>
        <end position="620"/>
    </location>
</feature>
<feature type="domain" description="Helicase ATP-binding" evidence="2">
    <location>
        <begin position="154"/>
        <end position="382"/>
    </location>
</feature>
<feature type="domain" description="Helicase C-terminal" evidence="3">
    <location>
        <begin position="394"/>
        <end position="556"/>
    </location>
</feature>
<feature type="region of interest" description="Disordered" evidence="4">
    <location>
        <begin position="53"/>
        <end position="115"/>
    </location>
</feature>
<feature type="region of interest" description="Disordered" evidence="4">
    <location>
        <begin position="244"/>
        <end position="292"/>
    </location>
</feature>
<feature type="region of interest" description="Disordered" evidence="4">
    <location>
        <begin position="556"/>
        <end position="620"/>
    </location>
</feature>
<feature type="short sequence motif" description="Q motif">
    <location>
        <begin position="142"/>
        <end position="150"/>
    </location>
</feature>
<feature type="short sequence motif" description="DEAD box">
    <location>
        <begin position="329"/>
        <end position="332"/>
    </location>
</feature>
<feature type="compositionally biased region" description="Basic and acidic residues" evidence="4">
    <location>
        <begin position="58"/>
        <end position="70"/>
    </location>
</feature>
<feature type="compositionally biased region" description="Acidic residues" evidence="4">
    <location>
        <begin position="71"/>
        <end position="82"/>
    </location>
</feature>
<feature type="compositionally biased region" description="Basic and acidic residues" evidence="4">
    <location>
        <begin position="252"/>
        <end position="265"/>
    </location>
</feature>
<feature type="compositionally biased region" description="Acidic residues" evidence="4">
    <location>
        <begin position="266"/>
        <end position="278"/>
    </location>
</feature>
<feature type="compositionally biased region" description="Basic residues" evidence="4">
    <location>
        <begin position="562"/>
        <end position="575"/>
    </location>
</feature>
<feature type="compositionally biased region" description="Basic and acidic residues" evidence="4">
    <location>
        <begin position="582"/>
        <end position="598"/>
    </location>
</feature>
<feature type="compositionally biased region" description="Basic and acidic residues" evidence="4">
    <location>
        <begin position="605"/>
        <end position="614"/>
    </location>
</feature>
<feature type="binding site" evidence="2">
    <location>
        <begin position="167"/>
        <end position="174"/>
    </location>
    <ligand>
        <name>ATP</name>
        <dbReference type="ChEBI" id="CHEBI:30616"/>
    </ligand>
</feature>
<sequence length="620" mass="67192">MASAFSLLTAGGAKFDKNRFKDDFQLFEAKKRKDRKGKSKQIDALAAGSALPSSLDFFGDHPHPQHKPEPEPESESESDFESDSGSSSTSIPAPPPQKITLTGSEPLPKSLHTNLPSLVNHESHSLTSAEGGPLLSALSRANIHSLWGVQCAVGGCLLEDRDTLCVAPTGSGKTLSYVLPTIVKLREPARKLKGTEEGKGVRALVVVPTHDLAVQIQGVIKAVTMGRHWRSMVLTKATEKAVWESAPGEAVKTGEDGDSEMKDGEDSGDEEEDEDDNESTGSVDEFAPKVSGNPEGLGIDVLVATPERLHHLIDSRRISLARTKYVILDESDRLLSSDFLPQVEPILSACSNPAVQKCFLSATMPAGAESLAKKWLKDGGVRVVVGVKDSAVTTVDQSLLYTGSESGKLLALRNLISSGQLPYPSLIFVQSIDRAEELYKTLVLDGIKVDAVHGGKAKTKRDEAIKDFRVGAVWMLVVTEVLARGMDFRGVKVVINYDFPQTVPSYIHRIGRTGRAGRPGKAITFFNIEDGPYLRTIANVLRSSGCPVPEYMLDMKKPTKNEKKKLAKAPPKRKAVGGGGRDLNREAGKKKKQMVEASKKRKMLERKGKGGNEEKNDDEE</sequence>
<protein>
    <recommendedName>
        <fullName>ATP-dependent RNA helicase ROK1</fullName>
        <ecNumber>3.6.4.13</ecNumber>
    </recommendedName>
</protein>